<accession>Q9FPS7</accession>
<accession>O49688</accession>
<name>UBP20_ARATH</name>
<feature type="chain" id="PRO_0000313046" description="Ubiquitin carboxyl-terminal hydrolase 20">
    <location>
        <begin position="1"/>
        <end position="695"/>
    </location>
</feature>
<feature type="domain" description="USP">
    <location>
        <begin position="176"/>
        <end position="476"/>
    </location>
</feature>
<feature type="region of interest" description="Disordered" evidence="4">
    <location>
        <begin position="1"/>
        <end position="20"/>
    </location>
</feature>
<feature type="region of interest" description="Disordered" evidence="4">
    <location>
        <begin position="42"/>
        <end position="162"/>
    </location>
</feature>
<feature type="region of interest" description="Disordered" evidence="4">
    <location>
        <begin position="556"/>
        <end position="585"/>
    </location>
</feature>
<feature type="region of interest" description="Disordered" evidence="4">
    <location>
        <begin position="674"/>
        <end position="695"/>
    </location>
</feature>
<feature type="compositionally biased region" description="Low complexity" evidence="4">
    <location>
        <begin position="9"/>
        <end position="20"/>
    </location>
</feature>
<feature type="compositionally biased region" description="Low complexity" evidence="4">
    <location>
        <begin position="61"/>
        <end position="86"/>
    </location>
</feature>
<feature type="compositionally biased region" description="Acidic residues" evidence="4">
    <location>
        <begin position="112"/>
        <end position="124"/>
    </location>
</feature>
<feature type="compositionally biased region" description="Low complexity" evidence="4">
    <location>
        <begin position="556"/>
        <end position="571"/>
    </location>
</feature>
<feature type="active site" description="Nucleophile" evidence="2 3">
    <location>
        <position position="185"/>
    </location>
</feature>
<feature type="active site" description="Proton acceptor" evidence="2 3">
    <location>
        <position position="435"/>
    </location>
</feature>
<evidence type="ECO:0000250" key="1"/>
<evidence type="ECO:0000255" key="2">
    <source>
        <dbReference type="PROSITE-ProRule" id="PRU10092"/>
    </source>
</evidence>
<evidence type="ECO:0000255" key="3">
    <source>
        <dbReference type="PROSITE-ProRule" id="PRU10093"/>
    </source>
</evidence>
<evidence type="ECO:0000256" key="4">
    <source>
        <dbReference type="SAM" id="MobiDB-lite"/>
    </source>
</evidence>
<evidence type="ECO:0000305" key="5"/>
<comment type="function">
    <text evidence="1">Recognizes and hydrolyzes the peptide bond at the C-terminal Gly of ubiquitin. Involved in the processing of poly-ubiquitin precursors as well as that of ubiquitinated proteins (By similarity).</text>
</comment>
<comment type="catalytic activity">
    <reaction>
        <text>Thiol-dependent hydrolysis of ester, thioester, amide, peptide and isopeptide bonds formed by the C-terminal Gly of ubiquitin (a 76-residue protein attached to proteins as an intracellular targeting signal).</text>
        <dbReference type="EC" id="3.4.19.12"/>
    </reaction>
</comment>
<comment type="similarity">
    <text evidence="5">Belongs to the peptidase C19 family.</text>
</comment>
<comment type="sequence caution" evidence="5">
    <conflict type="erroneous gene model prediction">
        <sequence resource="EMBL-CDS" id="CAA17132"/>
    </conflict>
    <text>The predicted gene At4g17890 has been split into 2 genes: At4g17890 and At4g17895.</text>
</comment>
<comment type="sequence caution" evidence="5">
    <conflict type="erroneous gene model prediction">
        <sequence resource="EMBL-CDS" id="CAB78791"/>
    </conflict>
    <text>The predicted gene At4g17890 has been split into 2 genes: At4g17890 and At4g17895.</text>
</comment>
<proteinExistence type="evidence at transcript level"/>
<dbReference type="EC" id="3.4.19.12"/>
<dbReference type="EMBL" id="AF302668">
    <property type="protein sequence ID" value="AAG42758.1"/>
    <property type="molecule type" value="mRNA"/>
</dbReference>
<dbReference type="EMBL" id="AL021889">
    <property type="protein sequence ID" value="CAA17132.1"/>
    <property type="status" value="ALT_SEQ"/>
    <property type="molecule type" value="Genomic_DNA"/>
</dbReference>
<dbReference type="EMBL" id="AL161547">
    <property type="protein sequence ID" value="CAB78791.1"/>
    <property type="status" value="ALT_SEQ"/>
    <property type="molecule type" value="Genomic_DNA"/>
</dbReference>
<dbReference type="EMBL" id="CP002687">
    <property type="protein sequence ID" value="AEE83963.1"/>
    <property type="molecule type" value="Genomic_DNA"/>
</dbReference>
<dbReference type="PIR" id="T05075">
    <property type="entry name" value="T05075"/>
</dbReference>
<dbReference type="RefSeq" id="NP_567544.1">
    <property type="nucleotide sequence ID" value="NM_117899.3"/>
</dbReference>
<dbReference type="SMR" id="Q9FPS7"/>
<dbReference type="BioGRID" id="12806">
    <property type="interactions" value="1"/>
</dbReference>
<dbReference type="FunCoup" id="Q9FPS7">
    <property type="interactions" value="246"/>
</dbReference>
<dbReference type="IntAct" id="Q9FPS7">
    <property type="interactions" value="1"/>
</dbReference>
<dbReference type="STRING" id="3702.Q9FPS7"/>
<dbReference type="MEROPS" id="C19.A16"/>
<dbReference type="PaxDb" id="3702-AT4G17895.1"/>
<dbReference type="ProteomicsDB" id="228484"/>
<dbReference type="EnsemblPlants" id="AT4G17895.1">
    <property type="protein sequence ID" value="AT4G17895.1"/>
    <property type="gene ID" value="AT4G17895"/>
</dbReference>
<dbReference type="GeneID" id="827513"/>
<dbReference type="Gramene" id="AT4G17895.1">
    <property type="protein sequence ID" value="AT4G17895.1"/>
    <property type="gene ID" value="AT4G17895"/>
</dbReference>
<dbReference type="KEGG" id="ath:AT4G17895"/>
<dbReference type="Araport" id="AT4G17895"/>
<dbReference type="TAIR" id="AT4G17895">
    <property type="gene designation" value="UBP20"/>
</dbReference>
<dbReference type="eggNOG" id="KOG0706">
    <property type="taxonomic scope" value="Eukaryota"/>
</dbReference>
<dbReference type="eggNOG" id="KOG1865">
    <property type="taxonomic scope" value="Eukaryota"/>
</dbReference>
<dbReference type="HOGENOM" id="CLU_018749_0_0_1"/>
<dbReference type="InParanoid" id="Q9FPS7"/>
<dbReference type="OMA" id="TCDNCNE"/>
<dbReference type="PhylomeDB" id="Q9FPS7"/>
<dbReference type="PRO" id="PR:Q9FPS7"/>
<dbReference type="Proteomes" id="UP000006548">
    <property type="component" value="Chromosome 4"/>
</dbReference>
<dbReference type="ExpressionAtlas" id="Q9FPS7">
    <property type="expression patterns" value="baseline and differential"/>
</dbReference>
<dbReference type="GO" id="GO:0004843">
    <property type="term" value="F:cysteine-type deubiquitinase activity"/>
    <property type="evidence" value="ECO:0007669"/>
    <property type="project" value="UniProtKB-EC"/>
</dbReference>
<dbReference type="GO" id="GO:0016579">
    <property type="term" value="P:protein deubiquitination"/>
    <property type="evidence" value="ECO:0007669"/>
    <property type="project" value="InterPro"/>
</dbReference>
<dbReference type="GO" id="GO:0006508">
    <property type="term" value="P:proteolysis"/>
    <property type="evidence" value="ECO:0007669"/>
    <property type="project" value="UniProtKB-KW"/>
</dbReference>
<dbReference type="CDD" id="cd02661">
    <property type="entry name" value="Peptidase_C19E"/>
    <property type="match status" value="1"/>
</dbReference>
<dbReference type="FunFam" id="3.90.70.10:FF:000116">
    <property type="entry name" value="Ubiquitin carboxyl-terminal hydrolase 20"/>
    <property type="match status" value="1"/>
</dbReference>
<dbReference type="Gene3D" id="3.90.70.10">
    <property type="entry name" value="Cysteine proteinases"/>
    <property type="match status" value="1"/>
</dbReference>
<dbReference type="InterPro" id="IPR038765">
    <property type="entry name" value="Papain-like_cys_pep_sf"/>
</dbReference>
<dbReference type="InterPro" id="IPR050164">
    <property type="entry name" value="Peptidase_C19"/>
</dbReference>
<dbReference type="InterPro" id="IPR001394">
    <property type="entry name" value="Peptidase_C19_UCH"/>
</dbReference>
<dbReference type="InterPro" id="IPR018200">
    <property type="entry name" value="USP_CS"/>
</dbReference>
<dbReference type="InterPro" id="IPR028889">
    <property type="entry name" value="USP_dom"/>
</dbReference>
<dbReference type="PANTHER" id="PTHR24006">
    <property type="entry name" value="UBIQUITIN CARBOXYL-TERMINAL HYDROLASE"/>
    <property type="match status" value="1"/>
</dbReference>
<dbReference type="PANTHER" id="PTHR24006:SF747">
    <property type="entry name" value="UBIQUITIN CARBOXYL-TERMINAL HYDROLASE 20"/>
    <property type="match status" value="1"/>
</dbReference>
<dbReference type="Pfam" id="PF00443">
    <property type="entry name" value="UCH"/>
    <property type="match status" value="1"/>
</dbReference>
<dbReference type="SUPFAM" id="SSF54001">
    <property type="entry name" value="Cysteine proteinases"/>
    <property type="match status" value="1"/>
</dbReference>
<dbReference type="PROSITE" id="PS00972">
    <property type="entry name" value="USP_1"/>
    <property type="match status" value="1"/>
</dbReference>
<dbReference type="PROSITE" id="PS00973">
    <property type="entry name" value="USP_2"/>
    <property type="match status" value="1"/>
</dbReference>
<dbReference type="PROSITE" id="PS50235">
    <property type="entry name" value="USP_3"/>
    <property type="match status" value="1"/>
</dbReference>
<protein>
    <recommendedName>
        <fullName>Ubiquitin carboxyl-terminal hydrolase 20</fullName>
        <ecNumber>3.4.19.12</ecNumber>
    </recommendedName>
    <alternativeName>
        <fullName>Deubiquitinating enzyme 20</fullName>
        <shortName>AtUBP20</shortName>
    </alternativeName>
    <alternativeName>
        <fullName>Ubiquitin thioesterase 20</fullName>
    </alternativeName>
    <alternativeName>
        <fullName>Ubiquitin-specific-processing protease 20</fullName>
    </alternativeName>
</protein>
<reference key="1">
    <citation type="journal article" date="2000" name="Plant Physiol.">
        <title>The ubiquitin-specific protease family from Arabidopsis. AtUBP1 and 2 are required for the resistance to the amino acid analog canavanine.</title>
        <authorList>
            <person name="Yan N."/>
            <person name="Doelling J.H."/>
            <person name="Falbel T.G."/>
            <person name="Durski A.M."/>
            <person name="Vierstra R.D."/>
        </authorList>
    </citation>
    <scope>NUCLEOTIDE SEQUENCE [MRNA]</scope>
    <scope>GENE FAMILY ORGANIZATION</scope>
    <scope>NOMENCLATURE</scope>
    <source>
        <strain>cv. Columbia</strain>
    </source>
</reference>
<reference key="2">
    <citation type="journal article" date="1999" name="Nature">
        <title>Sequence and analysis of chromosome 4 of the plant Arabidopsis thaliana.</title>
        <authorList>
            <person name="Mayer K.F.X."/>
            <person name="Schueller C."/>
            <person name="Wambutt R."/>
            <person name="Murphy G."/>
            <person name="Volckaert G."/>
            <person name="Pohl T."/>
            <person name="Duesterhoeft A."/>
            <person name="Stiekema W."/>
            <person name="Entian K.-D."/>
            <person name="Terryn N."/>
            <person name="Harris B."/>
            <person name="Ansorge W."/>
            <person name="Brandt P."/>
            <person name="Grivell L.A."/>
            <person name="Rieger M."/>
            <person name="Weichselgartner M."/>
            <person name="de Simone V."/>
            <person name="Obermaier B."/>
            <person name="Mache R."/>
            <person name="Mueller M."/>
            <person name="Kreis M."/>
            <person name="Delseny M."/>
            <person name="Puigdomenech P."/>
            <person name="Watson M."/>
            <person name="Schmidtheini T."/>
            <person name="Reichert B."/>
            <person name="Portetelle D."/>
            <person name="Perez-Alonso M."/>
            <person name="Boutry M."/>
            <person name="Bancroft I."/>
            <person name="Vos P."/>
            <person name="Hoheisel J."/>
            <person name="Zimmermann W."/>
            <person name="Wedler H."/>
            <person name="Ridley P."/>
            <person name="Langham S.-A."/>
            <person name="McCullagh B."/>
            <person name="Bilham L."/>
            <person name="Robben J."/>
            <person name="van der Schueren J."/>
            <person name="Grymonprez B."/>
            <person name="Chuang Y.-J."/>
            <person name="Vandenbussche F."/>
            <person name="Braeken M."/>
            <person name="Weltjens I."/>
            <person name="Voet M."/>
            <person name="Bastiaens I."/>
            <person name="Aert R."/>
            <person name="Defoor E."/>
            <person name="Weitzenegger T."/>
            <person name="Bothe G."/>
            <person name="Ramsperger U."/>
            <person name="Hilbert H."/>
            <person name="Braun M."/>
            <person name="Holzer E."/>
            <person name="Brandt A."/>
            <person name="Peters S."/>
            <person name="van Staveren M."/>
            <person name="Dirkse W."/>
            <person name="Mooijman P."/>
            <person name="Klein Lankhorst R."/>
            <person name="Rose M."/>
            <person name="Hauf J."/>
            <person name="Koetter P."/>
            <person name="Berneiser S."/>
            <person name="Hempel S."/>
            <person name="Feldpausch M."/>
            <person name="Lamberth S."/>
            <person name="Van den Daele H."/>
            <person name="De Keyser A."/>
            <person name="Buysshaert C."/>
            <person name="Gielen J."/>
            <person name="Villarroel R."/>
            <person name="De Clercq R."/>
            <person name="van Montagu M."/>
            <person name="Rogers J."/>
            <person name="Cronin A."/>
            <person name="Quail M.A."/>
            <person name="Bray-Allen S."/>
            <person name="Clark L."/>
            <person name="Doggett J."/>
            <person name="Hall S."/>
            <person name="Kay M."/>
            <person name="Lennard N."/>
            <person name="McLay K."/>
            <person name="Mayes R."/>
            <person name="Pettett A."/>
            <person name="Rajandream M.A."/>
            <person name="Lyne M."/>
            <person name="Benes V."/>
            <person name="Rechmann S."/>
            <person name="Borkova D."/>
            <person name="Bloecker H."/>
            <person name="Scharfe M."/>
            <person name="Grimm M."/>
            <person name="Loehnert T.-H."/>
            <person name="Dose S."/>
            <person name="de Haan M."/>
            <person name="Maarse A.C."/>
            <person name="Schaefer M."/>
            <person name="Mueller-Auer S."/>
            <person name="Gabel C."/>
            <person name="Fuchs M."/>
            <person name="Fartmann B."/>
            <person name="Granderath K."/>
            <person name="Dauner D."/>
            <person name="Herzl A."/>
            <person name="Neumann S."/>
            <person name="Argiriou A."/>
            <person name="Vitale D."/>
            <person name="Liguori R."/>
            <person name="Piravandi E."/>
            <person name="Massenet O."/>
            <person name="Quigley F."/>
            <person name="Clabauld G."/>
            <person name="Muendlein A."/>
            <person name="Felber R."/>
            <person name="Schnabl S."/>
            <person name="Hiller R."/>
            <person name="Schmidt W."/>
            <person name="Lecharny A."/>
            <person name="Aubourg S."/>
            <person name="Chefdor F."/>
            <person name="Cooke R."/>
            <person name="Berger C."/>
            <person name="Monfort A."/>
            <person name="Casacuberta E."/>
            <person name="Gibbons T."/>
            <person name="Weber N."/>
            <person name="Vandenbol M."/>
            <person name="Bargues M."/>
            <person name="Terol J."/>
            <person name="Torres A."/>
            <person name="Perez-Perez A."/>
            <person name="Purnelle B."/>
            <person name="Bent E."/>
            <person name="Johnson S."/>
            <person name="Tacon D."/>
            <person name="Jesse T."/>
            <person name="Heijnen L."/>
            <person name="Schwarz S."/>
            <person name="Scholler P."/>
            <person name="Heber S."/>
            <person name="Francs P."/>
            <person name="Bielke C."/>
            <person name="Frishman D."/>
            <person name="Haase D."/>
            <person name="Lemcke K."/>
            <person name="Mewes H.-W."/>
            <person name="Stocker S."/>
            <person name="Zaccaria P."/>
            <person name="Bevan M."/>
            <person name="Wilson R.K."/>
            <person name="de la Bastide M."/>
            <person name="Habermann K."/>
            <person name="Parnell L."/>
            <person name="Dedhia N."/>
            <person name="Gnoj L."/>
            <person name="Schutz K."/>
            <person name="Huang E."/>
            <person name="Spiegel L."/>
            <person name="Sekhon M."/>
            <person name="Murray J."/>
            <person name="Sheet P."/>
            <person name="Cordes M."/>
            <person name="Abu-Threideh J."/>
            <person name="Stoneking T."/>
            <person name="Kalicki J."/>
            <person name="Graves T."/>
            <person name="Harmon G."/>
            <person name="Edwards J."/>
            <person name="Latreille P."/>
            <person name="Courtney L."/>
            <person name="Cloud J."/>
            <person name="Abbott A."/>
            <person name="Scott K."/>
            <person name="Johnson D."/>
            <person name="Minx P."/>
            <person name="Bentley D."/>
            <person name="Fulton B."/>
            <person name="Miller N."/>
            <person name="Greco T."/>
            <person name="Kemp K."/>
            <person name="Kramer J."/>
            <person name="Fulton L."/>
            <person name="Mardis E."/>
            <person name="Dante M."/>
            <person name="Pepin K."/>
            <person name="Hillier L.W."/>
            <person name="Nelson J."/>
            <person name="Spieth J."/>
            <person name="Ryan E."/>
            <person name="Andrews S."/>
            <person name="Geisel C."/>
            <person name="Layman D."/>
            <person name="Du H."/>
            <person name="Ali J."/>
            <person name="Berghoff A."/>
            <person name="Jones K."/>
            <person name="Drone K."/>
            <person name="Cotton M."/>
            <person name="Joshu C."/>
            <person name="Antonoiu B."/>
            <person name="Zidanic M."/>
            <person name="Strong C."/>
            <person name="Sun H."/>
            <person name="Lamar B."/>
            <person name="Yordan C."/>
            <person name="Ma P."/>
            <person name="Zhong J."/>
            <person name="Preston R."/>
            <person name="Vil D."/>
            <person name="Shekher M."/>
            <person name="Matero A."/>
            <person name="Shah R."/>
            <person name="Swaby I.K."/>
            <person name="O'Shaughnessy A."/>
            <person name="Rodriguez M."/>
            <person name="Hoffman J."/>
            <person name="Till S."/>
            <person name="Granat S."/>
            <person name="Shohdy N."/>
            <person name="Hasegawa A."/>
            <person name="Hameed A."/>
            <person name="Lodhi M."/>
            <person name="Johnson A."/>
            <person name="Chen E."/>
            <person name="Marra M.A."/>
            <person name="Martienssen R."/>
            <person name="McCombie W.R."/>
        </authorList>
    </citation>
    <scope>NUCLEOTIDE SEQUENCE [LARGE SCALE GENOMIC DNA]</scope>
    <source>
        <strain>cv. Columbia</strain>
    </source>
</reference>
<reference key="3">
    <citation type="journal article" date="2017" name="Plant J.">
        <title>Araport11: a complete reannotation of the Arabidopsis thaliana reference genome.</title>
        <authorList>
            <person name="Cheng C.Y."/>
            <person name="Krishnakumar V."/>
            <person name="Chan A.P."/>
            <person name="Thibaud-Nissen F."/>
            <person name="Schobel S."/>
            <person name="Town C.D."/>
        </authorList>
    </citation>
    <scope>GENOME REANNOTATION</scope>
    <source>
        <strain>cv. Columbia</strain>
    </source>
</reference>
<keyword id="KW-0378">Hydrolase</keyword>
<keyword id="KW-0645">Protease</keyword>
<keyword id="KW-1185">Reference proteome</keyword>
<keyword id="KW-0788">Thiol protease</keyword>
<keyword id="KW-0833">Ubl conjugation pathway</keyword>
<sequence length="695" mass="78633">MLMAKPDVPSSILPRSSSILPNSIETLDENESIEAQVNNVQSLALSSPNRDRSDDDDNNNNHDSVSIPPPIYDGYSSSSSDESQSVPSPPINLDHDDDECQIPIRNTSQALDDIDDDIWGDDDLPETRRPWTPNVSPGFGSDDDDDNDDDNSKNEPRKSLFYGFRQEPEPVTGVGAGLWNLGNSCFLNSVFQCFTHTVPLIESLLSFRYEVPCHCGNEFFCVIRAIRYHIEAALRPERCPIAPYFFFDNLNYFSPDFQRYQQEDAHEFLQAFLEKLEICGSDRTSFRGDITSQDVFSGRLISGLRCCNCDYVSETYEKSVGLSLEIEDVDTLGSALESFTRVEKLDEQLTCDNCNEKVSKEKQLLLDKLPLVATFHLKRFKNNGLYMEKIYKHVKIPLEIDLQPYMRNIQENEVSTKYHLYALVEHFGYSVAYGHYSSYVRSAPKIWHHFDDSKVTRIDEDMVLSQDSYILFYAREGTRWFSSVYEEMQPLVEASLLNSSPKSVLDSSTNGECLSEISYENGDKASKPCDSAGVCNQHVKTKEDFVSLSNDDVFLSAESSSGEESPMGELLDPLDPDDSYSPCTEKESDSCLAIERATIRDDFFPLLLDQNQESSTSSPKLQERTFEMQLLQMEETTKSQEPWKQPLSSISNIADSMEAEFVYGDLMKKPSPRARELLDQAISTNGSPPKKLKTT</sequence>
<organism>
    <name type="scientific">Arabidopsis thaliana</name>
    <name type="common">Mouse-ear cress</name>
    <dbReference type="NCBI Taxonomy" id="3702"/>
    <lineage>
        <taxon>Eukaryota</taxon>
        <taxon>Viridiplantae</taxon>
        <taxon>Streptophyta</taxon>
        <taxon>Embryophyta</taxon>
        <taxon>Tracheophyta</taxon>
        <taxon>Spermatophyta</taxon>
        <taxon>Magnoliopsida</taxon>
        <taxon>eudicotyledons</taxon>
        <taxon>Gunneridae</taxon>
        <taxon>Pentapetalae</taxon>
        <taxon>rosids</taxon>
        <taxon>malvids</taxon>
        <taxon>Brassicales</taxon>
        <taxon>Brassicaceae</taxon>
        <taxon>Camelineae</taxon>
        <taxon>Arabidopsis</taxon>
    </lineage>
</organism>
<gene>
    <name type="primary">UBP20</name>
    <name type="ordered locus">At4g17895</name>
    <name type="ORF">T6K21.70</name>
</gene>